<proteinExistence type="inferred from homology"/>
<evidence type="ECO:0000255" key="1">
    <source>
        <dbReference type="PROSITE-ProRule" id="PRU00303"/>
    </source>
</evidence>
<accession>Q9CC87</accession>
<organism>
    <name type="scientific">Mycobacterium leprae (strain TN)</name>
    <dbReference type="NCBI Taxonomy" id="272631"/>
    <lineage>
        <taxon>Bacteria</taxon>
        <taxon>Bacillati</taxon>
        <taxon>Actinomycetota</taxon>
        <taxon>Actinomycetes</taxon>
        <taxon>Mycobacteriales</taxon>
        <taxon>Mycobacteriaceae</taxon>
        <taxon>Mycobacterium</taxon>
    </lineage>
</organism>
<dbReference type="EMBL" id="AL583920">
    <property type="protein sequence ID" value="CAC31496.1"/>
    <property type="molecule type" value="Genomic_DNA"/>
</dbReference>
<dbReference type="PIR" id="E87048">
    <property type="entry name" value="E87048"/>
</dbReference>
<dbReference type="RefSeq" id="NP_301812.1">
    <property type="nucleotide sequence ID" value="NC_002677.1"/>
</dbReference>
<dbReference type="RefSeq" id="WP_010908136.1">
    <property type="nucleotide sequence ID" value="NC_002677.1"/>
</dbReference>
<dbReference type="STRING" id="272631.gene:17574941"/>
<dbReference type="KEGG" id="mle:ML1115"/>
<dbReference type="PATRIC" id="fig|272631.5.peg.2011"/>
<dbReference type="Leproma" id="ML1115"/>
<dbReference type="eggNOG" id="COG1188">
    <property type="taxonomic scope" value="Bacteria"/>
</dbReference>
<dbReference type="HOGENOM" id="CLU_129265_0_0_11"/>
<dbReference type="OrthoDB" id="4624021at2"/>
<dbReference type="Proteomes" id="UP000000806">
    <property type="component" value="Chromosome"/>
</dbReference>
<dbReference type="GO" id="GO:0005886">
    <property type="term" value="C:plasma membrane"/>
    <property type="evidence" value="ECO:0007669"/>
    <property type="project" value="UniProtKB-SubCell"/>
</dbReference>
<dbReference type="InterPro" id="IPR024520">
    <property type="entry name" value="DUF3558"/>
</dbReference>
<dbReference type="Pfam" id="PF12079">
    <property type="entry name" value="DUF3558"/>
    <property type="match status" value="1"/>
</dbReference>
<dbReference type="PROSITE" id="PS51257">
    <property type="entry name" value="PROKAR_LIPOPROTEIN"/>
    <property type="match status" value="1"/>
</dbReference>
<protein>
    <recommendedName>
        <fullName>Putative lipoprotein LprB</fullName>
    </recommendedName>
</protein>
<comment type="subcellular location">
    <subcellularLocation>
        <location evidence="1">Cell membrane</location>
        <topology evidence="1">Lipid-anchor</topology>
    </subcellularLocation>
</comment>
<keyword id="KW-1003">Cell membrane</keyword>
<keyword id="KW-0449">Lipoprotein</keyword>
<keyword id="KW-0472">Membrane</keyword>
<keyword id="KW-0564">Palmitate</keyword>
<keyword id="KW-1185">Reference proteome</keyword>
<keyword id="KW-0732">Signal</keyword>
<reference key="1">
    <citation type="journal article" date="2001" name="Nature">
        <title>Massive gene decay in the leprosy bacillus.</title>
        <authorList>
            <person name="Cole S.T."/>
            <person name="Eiglmeier K."/>
            <person name="Parkhill J."/>
            <person name="James K.D."/>
            <person name="Thomson N.R."/>
            <person name="Wheeler P.R."/>
            <person name="Honore N."/>
            <person name="Garnier T."/>
            <person name="Churcher C.M."/>
            <person name="Harris D.E."/>
            <person name="Mungall K.L."/>
            <person name="Basham D."/>
            <person name="Brown D."/>
            <person name="Chillingworth T."/>
            <person name="Connor R."/>
            <person name="Davies R.M."/>
            <person name="Devlin K."/>
            <person name="Duthoy S."/>
            <person name="Feltwell T."/>
            <person name="Fraser A."/>
            <person name="Hamlin N."/>
            <person name="Holroyd S."/>
            <person name="Hornsby T."/>
            <person name="Jagels K."/>
            <person name="Lacroix C."/>
            <person name="Maclean J."/>
            <person name="Moule S."/>
            <person name="Murphy L.D."/>
            <person name="Oliver K."/>
            <person name="Quail M.A."/>
            <person name="Rajandream M.A."/>
            <person name="Rutherford K.M."/>
            <person name="Rutter S."/>
            <person name="Seeger K."/>
            <person name="Simon S."/>
            <person name="Simmonds M."/>
            <person name="Skelton J."/>
            <person name="Squares R."/>
            <person name="Squares S."/>
            <person name="Stevens K."/>
            <person name="Taylor K."/>
            <person name="Whitehead S."/>
            <person name="Woodward J.R."/>
            <person name="Barrell B.G."/>
        </authorList>
    </citation>
    <scope>NUCLEOTIDE SEQUENCE [LARGE SCALE GENOMIC DNA]</scope>
    <source>
        <strain>TN</strain>
    </source>
</reference>
<name>LPRB_MYCLE</name>
<sequence length="188" mass="19946">MRCDVRALALAARGLIELMIVIPMVAGCSNAGSNKSVGTISSTPGNTEGHHGPMFPRCGGISDQTMSQLTKVTGLTNTARNSVGCQWLAGGGIVGPHFSFSWYRGSPIGRERKTEELSRASVDDININGHSGFIAVGNEPSLGDSLCEVGIQFQDDFIEWSVSFSQKPFPSPCGIAKELTRQSIANSK</sequence>
<feature type="signal peptide" evidence="1">
    <location>
        <begin position="1"/>
        <end position="27"/>
    </location>
</feature>
<feature type="chain" id="PRO_0000018137" description="Putative lipoprotein LprB">
    <location>
        <begin position="28"/>
        <end position="188"/>
    </location>
</feature>
<feature type="lipid moiety-binding region" description="N-palmitoyl cysteine" evidence="1">
    <location>
        <position position="28"/>
    </location>
</feature>
<feature type="lipid moiety-binding region" description="S-diacylglycerol cysteine" evidence="1">
    <location>
        <position position="28"/>
    </location>
</feature>
<gene>
    <name type="primary">lprB</name>
    <name type="ordered locus">ML1115</name>
</gene>